<evidence type="ECO:0000250" key="1"/>
<evidence type="ECO:0000305" key="2"/>
<proteinExistence type="inferred from homology"/>
<organism>
    <name type="scientific">Mycobacterium tuberculosis (strain ATCC 25618 / H37Rv)</name>
    <dbReference type="NCBI Taxonomy" id="83332"/>
    <lineage>
        <taxon>Bacteria</taxon>
        <taxon>Bacillati</taxon>
        <taxon>Actinomycetota</taxon>
        <taxon>Actinomycetes</taxon>
        <taxon>Mycobacteriales</taxon>
        <taxon>Mycobacteriaceae</taxon>
        <taxon>Mycobacterium</taxon>
        <taxon>Mycobacterium tuberculosis complex</taxon>
    </lineage>
</organism>
<gene>
    <name type="primary">recO</name>
    <name type="ordered locus">Rv2362c</name>
    <name type="ORF">MTCY27.18</name>
</gene>
<comment type="function">
    <text evidence="1">Involved in DNA repair and RecF pathway recombination.</text>
</comment>
<comment type="similarity">
    <text evidence="2">Belongs to the RecO family.</text>
</comment>
<protein>
    <recommendedName>
        <fullName>DNA repair protein RecO</fullName>
    </recommendedName>
    <alternativeName>
        <fullName>Recombination protein O</fullName>
    </alternativeName>
</protein>
<feature type="chain" id="PRO_0000204972" description="DNA repair protein RecO">
    <location>
        <begin position="1"/>
        <end position="265"/>
    </location>
</feature>
<reference key="1">
    <citation type="journal article" date="1998" name="Nature">
        <title>Deciphering the biology of Mycobacterium tuberculosis from the complete genome sequence.</title>
        <authorList>
            <person name="Cole S.T."/>
            <person name="Brosch R."/>
            <person name="Parkhill J."/>
            <person name="Garnier T."/>
            <person name="Churcher C.M."/>
            <person name="Harris D.E."/>
            <person name="Gordon S.V."/>
            <person name="Eiglmeier K."/>
            <person name="Gas S."/>
            <person name="Barry C.E. III"/>
            <person name="Tekaia F."/>
            <person name="Badcock K."/>
            <person name="Basham D."/>
            <person name="Brown D."/>
            <person name="Chillingworth T."/>
            <person name="Connor R."/>
            <person name="Davies R.M."/>
            <person name="Devlin K."/>
            <person name="Feltwell T."/>
            <person name="Gentles S."/>
            <person name="Hamlin N."/>
            <person name="Holroyd S."/>
            <person name="Hornsby T."/>
            <person name="Jagels K."/>
            <person name="Krogh A."/>
            <person name="McLean J."/>
            <person name="Moule S."/>
            <person name="Murphy L.D."/>
            <person name="Oliver S."/>
            <person name="Osborne J."/>
            <person name="Quail M.A."/>
            <person name="Rajandream M.A."/>
            <person name="Rogers J."/>
            <person name="Rutter S."/>
            <person name="Seeger K."/>
            <person name="Skelton S."/>
            <person name="Squares S."/>
            <person name="Squares R."/>
            <person name="Sulston J.E."/>
            <person name="Taylor K."/>
            <person name="Whitehead S."/>
            <person name="Barrell B.G."/>
        </authorList>
    </citation>
    <scope>NUCLEOTIDE SEQUENCE [LARGE SCALE GENOMIC DNA]</scope>
    <source>
        <strain>ATCC 25618 / H37Rv</strain>
    </source>
</reference>
<accession>P9WHI5</accession>
<accession>L0T9L0</accession>
<accession>O05836</accession>
<accession>P65983</accession>
<sequence>MRLYRDRAVVLRQHKLGEADRIVTLLTRDHGLVRAVAKGVRRTRSKFGARLEPFAHIEVQLHPGRNLDIVTQVVSVDAFATDIVADYGRYTCGCAILETAERLAGEERAPAPALHRLTVGALRAVADGQRPRDLLLDAYLLRAMGIAGWAPALTECARCATPGPHRAFHIATGGSVCAHCRPAGSTTPPLGVVDLMSALYDGDWEAAEAAPQSARSHVSGLVAAHLQWHLERQLKTLPLVERFYQADRSVAERRAALIGQDIAGG</sequence>
<keyword id="KW-0227">DNA damage</keyword>
<keyword id="KW-0233">DNA recombination</keyword>
<keyword id="KW-0234">DNA repair</keyword>
<keyword id="KW-1185">Reference proteome</keyword>
<dbReference type="EMBL" id="AL123456">
    <property type="protein sequence ID" value="CCP45150.1"/>
    <property type="molecule type" value="Genomic_DNA"/>
</dbReference>
<dbReference type="PIR" id="A70586">
    <property type="entry name" value="A70586"/>
</dbReference>
<dbReference type="RefSeq" id="NP_216878.1">
    <property type="nucleotide sequence ID" value="NC_000962.3"/>
</dbReference>
<dbReference type="RefSeq" id="WP_003412222.1">
    <property type="nucleotide sequence ID" value="NZ_NVQJ01000029.1"/>
</dbReference>
<dbReference type="SMR" id="P9WHI5"/>
<dbReference type="FunCoup" id="P9WHI5">
    <property type="interactions" value="2"/>
</dbReference>
<dbReference type="STRING" id="83332.Rv2362c"/>
<dbReference type="PaxDb" id="83332-Rv2362c"/>
<dbReference type="DNASU" id="888954"/>
<dbReference type="GeneID" id="45426349"/>
<dbReference type="GeneID" id="888954"/>
<dbReference type="KEGG" id="mtu:Rv2362c"/>
<dbReference type="KEGG" id="mtv:RVBD_2362c"/>
<dbReference type="TubercuList" id="Rv2362c"/>
<dbReference type="eggNOG" id="COG1381">
    <property type="taxonomic scope" value="Bacteria"/>
</dbReference>
<dbReference type="InParanoid" id="P9WHI5"/>
<dbReference type="OrthoDB" id="9812244at2"/>
<dbReference type="PhylomeDB" id="P9WHI5"/>
<dbReference type="Proteomes" id="UP000001584">
    <property type="component" value="Chromosome"/>
</dbReference>
<dbReference type="GO" id="GO:0043590">
    <property type="term" value="C:bacterial nucleoid"/>
    <property type="evidence" value="ECO:0000318"/>
    <property type="project" value="GO_Central"/>
</dbReference>
<dbReference type="GO" id="GO:0009274">
    <property type="term" value="C:peptidoglycan-based cell wall"/>
    <property type="evidence" value="ECO:0007005"/>
    <property type="project" value="MTBBASE"/>
</dbReference>
<dbReference type="GO" id="GO:0006310">
    <property type="term" value="P:DNA recombination"/>
    <property type="evidence" value="ECO:0007669"/>
    <property type="project" value="UniProtKB-UniRule"/>
</dbReference>
<dbReference type="GO" id="GO:0006302">
    <property type="term" value="P:double-strand break repair"/>
    <property type="evidence" value="ECO:0000318"/>
    <property type="project" value="GO_Central"/>
</dbReference>
<dbReference type="FunFam" id="1.20.1440.120:FF:000002">
    <property type="entry name" value="DNA repair protein RecO"/>
    <property type="match status" value="1"/>
</dbReference>
<dbReference type="FunFam" id="2.40.50.140:FF:000176">
    <property type="entry name" value="DNA repair protein RecO"/>
    <property type="match status" value="1"/>
</dbReference>
<dbReference type="Gene3D" id="2.40.50.140">
    <property type="entry name" value="Nucleic acid-binding proteins"/>
    <property type="match status" value="1"/>
</dbReference>
<dbReference type="Gene3D" id="1.20.1440.120">
    <property type="entry name" value="Recombination protein O, C-terminal domain"/>
    <property type="match status" value="1"/>
</dbReference>
<dbReference type="HAMAP" id="MF_00201">
    <property type="entry name" value="RecO"/>
    <property type="match status" value="1"/>
</dbReference>
<dbReference type="InterPro" id="IPR037278">
    <property type="entry name" value="ARFGAP/RecO"/>
</dbReference>
<dbReference type="InterPro" id="IPR022572">
    <property type="entry name" value="DNA_rep/recomb_RecO_N"/>
</dbReference>
<dbReference type="InterPro" id="IPR012340">
    <property type="entry name" value="NA-bd_OB-fold"/>
</dbReference>
<dbReference type="InterPro" id="IPR003717">
    <property type="entry name" value="RecO"/>
</dbReference>
<dbReference type="InterPro" id="IPR042242">
    <property type="entry name" value="RecO_C"/>
</dbReference>
<dbReference type="NCBIfam" id="TIGR00613">
    <property type="entry name" value="reco"/>
    <property type="match status" value="1"/>
</dbReference>
<dbReference type="PANTHER" id="PTHR33991">
    <property type="entry name" value="DNA REPAIR PROTEIN RECO"/>
    <property type="match status" value="1"/>
</dbReference>
<dbReference type="PANTHER" id="PTHR33991:SF1">
    <property type="entry name" value="DNA REPAIR PROTEIN RECO"/>
    <property type="match status" value="1"/>
</dbReference>
<dbReference type="Pfam" id="PF02565">
    <property type="entry name" value="RecO_C"/>
    <property type="match status" value="1"/>
</dbReference>
<dbReference type="Pfam" id="PF11967">
    <property type="entry name" value="RecO_N"/>
    <property type="match status" value="1"/>
</dbReference>
<dbReference type="SUPFAM" id="SSF57863">
    <property type="entry name" value="ArfGap/RecO-like zinc finger"/>
    <property type="match status" value="1"/>
</dbReference>
<dbReference type="SUPFAM" id="SSF50249">
    <property type="entry name" value="Nucleic acid-binding proteins"/>
    <property type="match status" value="1"/>
</dbReference>
<name>RECO_MYCTU</name>